<name>ATG17_KLUMD</name>
<feature type="chain" id="PRO_0000443917" description="Autophagy-related protein 17">
    <location>
        <begin position="1"/>
        <end position="421"/>
    </location>
</feature>
<sequence>MSYHYDGIPDIEIDLYWNKARNHLLKAQVECEESLKLLSTIRSEMDSCQKSRLKLQFILNCLVNQVEFFSSVILEKCIAVELLDNEWSKVVLVGVVKDLNYWQDEITNKINALKNTKYDLNAEYKSLADFICEDHVEILQQKLDEVPFIKKQVSNIRQHYKSIKEGVQYQLKAGKVKKLKKYYETHFSRDNHLFELLEGEYLTKLNSYESELTDYIRSITDHFDKCSILKADGLPPQDLKDLFEVVKNDDAELEHIRELIYESDAEITQFYKNVEGTITSIKENVADFYGLSTKIMVELEKCEEYVSIFQDIAKLVSVYKESCIRKIEQVQELCEVYDKFKKAYFNLLKERERRKSVAIQMKSILDECKGKLMALNEDDLDHRQQFLHENGDYLPENIWPGKIDDMTPLYSLEYTIYNEQK</sequence>
<accession>W0T3R8</accession>
<reference key="1">
    <citation type="journal article" date="2015" name="Biotechnol. Biofuels">
        <title>Genetic basis of the highly efficient yeast Kluyveromyces marxianus: complete genome sequence and transcriptome analyses.</title>
        <authorList>
            <person name="Lertwattanasakul N."/>
            <person name="Kosaka T."/>
            <person name="Hosoyama A."/>
            <person name="Suzuki Y."/>
            <person name="Rodrussamee N."/>
            <person name="Matsutani M."/>
            <person name="Murata M."/>
            <person name="Fujimoto N."/>
            <person name="Suprayogi X."/>
            <person name="Tsuchikane K."/>
            <person name="Limtong S."/>
            <person name="Fujita N."/>
            <person name="Yamada M."/>
        </authorList>
    </citation>
    <scope>NUCLEOTIDE SEQUENCE [LARGE SCALE GENOMIC DNA]</scope>
    <source>
        <strain>DMKU3-1042 / BCC 29191 / NBRC 104275</strain>
    </source>
</reference>
<reference key="2">
    <citation type="journal article" date="2015" name="J. Biol. Chem.">
        <title>The thermotolerant yeast Kluyveromyces marxianus is a useful organism for structural and biochemical studies of autophagy.</title>
        <authorList>
            <person name="Yamamoto H."/>
            <person name="Shima T."/>
            <person name="Yamaguchi M."/>
            <person name="Mochizuki Y."/>
            <person name="Hoshida H."/>
            <person name="Kakuta S."/>
            <person name="Kondo-Kakuta C."/>
            <person name="Noda N.N."/>
            <person name="Inagaki F."/>
            <person name="Itoh T."/>
            <person name="Akada R."/>
            <person name="Ohsumi Y."/>
        </authorList>
    </citation>
    <scope>IDENTIFICATION</scope>
    <scope>FUNCTION</scope>
    <scope>DISRUPTION PHENOTYPE</scope>
</reference>
<gene>
    <name evidence="3" type="primary">ATG17</name>
    <name type="ORF">KLMA_10625</name>
</gene>
<dbReference type="EMBL" id="AP012213">
    <property type="protein sequence ID" value="BAO38247.1"/>
    <property type="molecule type" value="Genomic_DNA"/>
</dbReference>
<dbReference type="RefSeq" id="XP_022674138.1">
    <property type="nucleotide sequence ID" value="XM_022822302.1"/>
</dbReference>
<dbReference type="SMR" id="W0T3R8"/>
<dbReference type="GeneID" id="34714282"/>
<dbReference type="VEuPathDB" id="FungiDB:KLMA_10625"/>
<dbReference type="OrthoDB" id="1937984at2759"/>
<dbReference type="Proteomes" id="UP000065495">
    <property type="component" value="Chromosome 1"/>
</dbReference>
<dbReference type="GO" id="GO:1990316">
    <property type="term" value="C:Atg1/ULK1 kinase complex"/>
    <property type="evidence" value="ECO:0007669"/>
    <property type="project" value="TreeGrafter"/>
</dbReference>
<dbReference type="GO" id="GO:0034045">
    <property type="term" value="C:phagophore assembly site membrane"/>
    <property type="evidence" value="ECO:0007669"/>
    <property type="project" value="UniProtKB-SubCell"/>
</dbReference>
<dbReference type="GO" id="GO:0060090">
    <property type="term" value="F:molecular adaptor activity"/>
    <property type="evidence" value="ECO:0007669"/>
    <property type="project" value="TreeGrafter"/>
</dbReference>
<dbReference type="GO" id="GO:0030295">
    <property type="term" value="F:protein kinase activator activity"/>
    <property type="evidence" value="ECO:0007669"/>
    <property type="project" value="TreeGrafter"/>
</dbReference>
<dbReference type="GO" id="GO:0000045">
    <property type="term" value="P:autophagosome assembly"/>
    <property type="evidence" value="ECO:0007669"/>
    <property type="project" value="TreeGrafter"/>
</dbReference>
<dbReference type="GO" id="GO:0000422">
    <property type="term" value="P:autophagy of mitochondrion"/>
    <property type="evidence" value="ECO:0007669"/>
    <property type="project" value="TreeGrafter"/>
</dbReference>
<dbReference type="GO" id="GO:0034727">
    <property type="term" value="P:piecemeal microautophagy of the nucleus"/>
    <property type="evidence" value="ECO:0007669"/>
    <property type="project" value="TreeGrafter"/>
</dbReference>
<dbReference type="GO" id="GO:0015031">
    <property type="term" value="P:protein transport"/>
    <property type="evidence" value="ECO:0007669"/>
    <property type="project" value="UniProtKB-KW"/>
</dbReference>
<dbReference type="InterPro" id="IPR007240">
    <property type="entry name" value="Atg17"/>
</dbReference>
<dbReference type="InterPro" id="IPR045326">
    <property type="entry name" value="ATG17-like_dom"/>
</dbReference>
<dbReference type="PANTHER" id="PTHR28005">
    <property type="entry name" value="AUTOPHAGY-RELATED PROTEIN 17"/>
    <property type="match status" value="1"/>
</dbReference>
<dbReference type="PANTHER" id="PTHR28005:SF1">
    <property type="entry name" value="AUTOPHAGY-RELATED PROTEIN 17"/>
    <property type="match status" value="1"/>
</dbReference>
<dbReference type="Pfam" id="PF04108">
    <property type="entry name" value="ATG17_like"/>
    <property type="match status" value="1"/>
</dbReference>
<evidence type="ECO:0000250" key="1">
    <source>
        <dbReference type="UniProtKB" id="Q06410"/>
    </source>
</evidence>
<evidence type="ECO:0000269" key="2">
    <source>
    </source>
</evidence>
<evidence type="ECO:0000303" key="3">
    <source>
    </source>
</evidence>
<evidence type="ECO:0000305" key="4"/>
<keyword id="KW-0072">Autophagy</keyword>
<keyword id="KW-0963">Cytoplasm</keyword>
<keyword id="KW-0472">Membrane</keyword>
<keyword id="KW-0653">Protein transport</keyword>
<keyword id="KW-0813">Transport</keyword>
<protein>
    <recommendedName>
        <fullName evidence="3">Autophagy-related protein 17</fullName>
    </recommendedName>
</protein>
<comment type="function">
    <text evidence="1 2">Autophagy-specific protein that functions with ATG13, ATG29, and CIS1/ATG31 in response to autophagy-inducing signals as a scaffold to recruit other ATG proteins to organize pre-autophagosomal structure (PAS) formation (PubMed:26442587). Modulates the timing and magnitude of the autophagy response, such as the size of the sequestering vesicles, through interacting with and regulating ATG1 kinase activity (By similarity). Plays particularly a role in pexophagy and nucleophagy (By similarity). With ATG13, is required for ATG1 activation by autophosphorylation (By similarity). Recruits ATG9 to the pre-autophagosomal structure (By similarity).</text>
</comment>
<comment type="subunit">
    <text evidence="1">Forms a complex with ATG13, ATG29 and CIS1/ATG31 (By similarity). The ATG17-ATG29-ATG31 complex interacts with the ATG1-ATG13 complex (By similarity). Forms a complex with SNX4 and ATG20 (By similarity). Interacts with ATG11 (By similarity).</text>
</comment>
<comment type="subcellular location">
    <subcellularLocation>
        <location evidence="1">Cytoplasm</location>
    </subcellularLocation>
    <subcellularLocation>
        <location evidence="1">Preautophagosomal structure membrane</location>
        <topology evidence="1">Peripheral membrane protein</topology>
    </subcellularLocation>
</comment>
<comment type="disruption phenotype">
    <text evidence="2">Mislocalizes ATG8 in the cytosol, when ATG11 is also deleted (PubMed:26442587).</text>
</comment>
<comment type="miscellaneous">
    <text evidence="2">Kluyveromyces marxianus proteins are shorter in length and have a more ordered secondary structure than their S.cerevisiae counterparts, which might contribute to the superior thermotolerance and solubility (PubMed:26442587). K.marxianus could be therefore useful as a new model organism for further elucidation of the molecular details of autophagy (PubMed:26442587).</text>
</comment>
<comment type="similarity">
    <text evidence="4">Belongs to the ATG17 family.</text>
</comment>
<proteinExistence type="inferred from homology"/>
<organism>
    <name type="scientific">Kluyveromyces marxianus (strain DMKU3-1042 / BCC 29191 / NBRC 104275)</name>
    <name type="common">Yeast</name>
    <name type="synonym">Candida kefyr</name>
    <dbReference type="NCBI Taxonomy" id="1003335"/>
    <lineage>
        <taxon>Eukaryota</taxon>
        <taxon>Fungi</taxon>
        <taxon>Dikarya</taxon>
        <taxon>Ascomycota</taxon>
        <taxon>Saccharomycotina</taxon>
        <taxon>Saccharomycetes</taxon>
        <taxon>Saccharomycetales</taxon>
        <taxon>Saccharomycetaceae</taxon>
        <taxon>Kluyveromyces</taxon>
    </lineage>
</organism>